<name>TDH_ECOK1</name>
<sequence length="341" mass="37285">MKALSKLKAEEGIWMTDVPVPELGHNDLLIKIRKTAICGTDVHIYNWDEWSQKTIPVPMVVGHEYVGEVVGIGQEVKGFKIGDRVSGEGHITCGHCRNCRGGRTHLCRNTIGVGVNRPGCFAEYLVIPAFNAFKIPDNISDDLASIFDPFGNAVHTALSFDLVGEDVLVSGAGPIGIMAAAVAKHVGARNVVITDVNEYRLELARKMGITRAVNVAKENLNDVMTELGMTEGFDVGLEMSGAPPAFRTMLDTMNHGGRIAMLGIPPSDMSIDWTKVIFKGLFIKGIYGREMFETWYKMAALIQSGLDLSPIITHRFSIDDFQKGFDAMRSGQSGKVILSWD</sequence>
<proteinExistence type="inferred from homology"/>
<keyword id="KW-0963">Cytoplasm</keyword>
<keyword id="KW-0479">Metal-binding</keyword>
<keyword id="KW-0520">NAD</keyword>
<keyword id="KW-0560">Oxidoreductase</keyword>
<keyword id="KW-1185">Reference proteome</keyword>
<keyword id="KW-0862">Zinc</keyword>
<accession>A1AHF3</accession>
<evidence type="ECO:0000255" key="1">
    <source>
        <dbReference type="HAMAP-Rule" id="MF_00627"/>
    </source>
</evidence>
<organism>
    <name type="scientific">Escherichia coli O1:K1 / APEC</name>
    <dbReference type="NCBI Taxonomy" id="405955"/>
    <lineage>
        <taxon>Bacteria</taxon>
        <taxon>Pseudomonadati</taxon>
        <taxon>Pseudomonadota</taxon>
        <taxon>Gammaproteobacteria</taxon>
        <taxon>Enterobacterales</taxon>
        <taxon>Enterobacteriaceae</taxon>
        <taxon>Escherichia</taxon>
    </lineage>
</organism>
<dbReference type="EC" id="1.1.1.103" evidence="1"/>
<dbReference type="EMBL" id="CP000468">
    <property type="protein sequence ID" value="ABJ03093.1"/>
    <property type="molecule type" value="Genomic_DNA"/>
</dbReference>
<dbReference type="RefSeq" id="WP_000646018.1">
    <property type="nucleotide sequence ID" value="NZ_CADILS010000015.1"/>
</dbReference>
<dbReference type="SMR" id="A1AHF3"/>
<dbReference type="KEGG" id="ecv:APECO1_2839"/>
<dbReference type="HOGENOM" id="CLU_026673_11_0_6"/>
<dbReference type="UniPathway" id="UPA00046">
    <property type="reaction ID" value="UER00505"/>
</dbReference>
<dbReference type="Proteomes" id="UP000008216">
    <property type="component" value="Chromosome"/>
</dbReference>
<dbReference type="GO" id="GO:0005737">
    <property type="term" value="C:cytoplasm"/>
    <property type="evidence" value="ECO:0007669"/>
    <property type="project" value="UniProtKB-SubCell"/>
</dbReference>
<dbReference type="GO" id="GO:0008743">
    <property type="term" value="F:L-threonine 3-dehydrogenase activity"/>
    <property type="evidence" value="ECO:0007669"/>
    <property type="project" value="UniProtKB-UniRule"/>
</dbReference>
<dbReference type="GO" id="GO:0008270">
    <property type="term" value="F:zinc ion binding"/>
    <property type="evidence" value="ECO:0007669"/>
    <property type="project" value="UniProtKB-UniRule"/>
</dbReference>
<dbReference type="GO" id="GO:0019518">
    <property type="term" value="P:L-threonine catabolic process to glycine"/>
    <property type="evidence" value="ECO:0007669"/>
    <property type="project" value="UniProtKB-UniPathway"/>
</dbReference>
<dbReference type="FunFam" id="3.40.50.720:FF:000059">
    <property type="entry name" value="L-threonine 3-dehydrogenase"/>
    <property type="match status" value="1"/>
</dbReference>
<dbReference type="Gene3D" id="3.90.180.10">
    <property type="entry name" value="Medium-chain alcohol dehydrogenases, catalytic domain"/>
    <property type="match status" value="1"/>
</dbReference>
<dbReference type="Gene3D" id="3.40.50.720">
    <property type="entry name" value="NAD(P)-binding Rossmann-like Domain"/>
    <property type="match status" value="1"/>
</dbReference>
<dbReference type="HAMAP" id="MF_00627">
    <property type="entry name" value="Thr_dehydrog"/>
    <property type="match status" value="1"/>
</dbReference>
<dbReference type="InterPro" id="IPR013149">
    <property type="entry name" value="ADH-like_C"/>
</dbReference>
<dbReference type="InterPro" id="IPR013154">
    <property type="entry name" value="ADH-like_N"/>
</dbReference>
<dbReference type="InterPro" id="IPR002328">
    <property type="entry name" value="ADH_Zn_CS"/>
</dbReference>
<dbReference type="InterPro" id="IPR011032">
    <property type="entry name" value="GroES-like_sf"/>
</dbReference>
<dbReference type="InterPro" id="IPR004627">
    <property type="entry name" value="L-Threonine_3-DHase"/>
</dbReference>
<dbReference type="InterPro" id="IPR036291">
    <property type="entry name" value="NAD(P)-bd_dom_sf"/>
</dbReference>
<dbReference type="InterPro" id="IPR020843">
    <property type="entry name" value="PKS_ER"/>
</dbReference>
<dbReference type="InterPro" id="IPR050129">
    <property type="entry name" value="Zn_alcohol_dh"/>
</dbReference>
<dbReference type="NCBIfam" id="NF003808">
    <property type="entry name" value="PRK05396.1"/>
    <property type="match status" value="1"/>
</dbReference>
<dbReference type="NCBIfam" id="TIGR00692">
    <property type="entry name" value="tdh"/>
    <property type="match status" value="1"/>
</dbReference>
<dbReference type="PANTHER" id="PTHR43401">
    <property type="entry name" value="L-THREONINE 3-DEHYDROGENASE"/>
    <property type="match status" value="1"/>
</dbReference>
<dbReference type="PANTHER" id="PTHR43401:SF2">
    <property type="entry name" value="L-THREONINE 3-DEHYDROGENASE"/>
    <property type="match status" value="1"/>
</dbReference>
<dbReference type="Pfam" id="PF08240">
    <property type="entry name" value="ADH_N"/>
    <property type="match status" value="1"/>
</dbReference>
<dbReference type="Pfam" id="PF00107">
    <property type="entry name" value="ADH_zinc_N"/>
    <property type="match status" value="1"/>
</dbReference>
<dbReference type="SMART" id="SM00829">
    <property type="entry name" value="PKS_ER"/>
    <property type="match status" value="1"/>
</dbReference>
<dbReference type="SUPFAM" id="SSF50129">
    <property type="entry name" value="GroES-like"/>
    <property type="match status" value="1"/>
</dbReference>
<dbReference type="SUPFAM" id="SSF51735">
    <property type="entry name" value="NAD(P)-binding Rossmann-fold domains"/>
    <property type="match status" value="1"/>
</dbReference>
<dbReference type="PROSITE" id="PS00059">
    <property type="entry name" value="ADH_ZINC"/>
    <property type="match status" value="1"/>
</dbReference>
<comment type="function">
    <text evidence="1">Catalyzes the NAD(+)-dependent oxidation of L-threonine to 2-amino-3-ketobutyrate.</text>
</comment>
<comment type="catalytic activity">
    <reaction evidence="1">
        <text>L-threonine + NAD(+) = (2S)-2-amino-3-oxobutanoate + NADH + H(+)</text>
        <dbReference type="Rhea" id="RHEA:13161"/>
        <dbReference type="ChEBI" id="CHEBI:15378"/>
        <dbReference type="ChEBI" id="CHEBI:57540"/>
        <dbReference type="ChEBI" id="CHEBI:57926"/>
        <dbReference type="ChEBI" id="CHEBI:57945"/>
        <dbReference type="ChEBI" id="CHEBI:78948"/>
        <dbReference type="EC" id="1.1.1.103"/>
    </reaction>
</comment>
<comment type="cofactor">
    <cofactor evidence="1">
        <name>Zn(2+)</name>
        <dbReference type="ChEBI" id="CHEBI:29105"/>
    </cofactor>
    <text evidence="1">Binds 2 Zn(2+) ions per subunit.</text>
</comment>
<comment type="pathway">
    <text evidence="1">Amino-acid degradation; L-threonine degradation via oxydo-reductase pathway; glycine from L-threonine: step 1/2.</text>
</comment>
<comment type="subunit">
    <text evidence="1">Homotetramer.</text>
</comment>
<comment type="subcellular location">
    <subcellularLocation>
        <location evidence="1">Cytoplasm</location>
    </subcellularLocation>
</comment>
<comment type="similarity">
    <text evidence="1">Belongs to the zinc-containing alcohol dehydrogenase family.</text>
</comment>
<feature type="chain" id="PRO_1000051632" description="L-threonine 3-dehydrogenase">
    <location>
        <begin position="1"/>
        <end position="341"/>
    </location>
</feature>
<feature type="active site" description="Charge relay system" evidence="1">
    <location>
        <position position="40"/>
    </location>
</feature>
<feature type="active site" description="Charge relay system" evidence="1">
    <location>
        <position position="43"/>
    </location>
</feature>
<feature type="binding site" evidence="1">
    <location>
        <position position="38"/>
    </location>
    <ligand>
        <name>Zn(2+)</name>
        <dbReference type="ChEBI" id="CHEBI:29105"/>
        <label>1</label>
        <note>catalytic</note>
    </ligand>
</feature>
<feature type="binding site" evidence="1">
    <location>
        <position position="63"/>
    </location>
    <ligand>
        <name>Zn(2+)</name>
        <dbReference type="ChEBI" id="CHEBI:29105"/>
        <label>1</label>
        <note>catalytic</note>
    </ligand>
</feature>
<feature type="binding site" evidence="1">
    <location>
        <position position="64"/>
    </location>
    <ligand>
        <name>Zn(2+)</name>
        <dbReference type="ChEBI" id="CHEBI:29105"/>
        <label>1</label>
        <note>catalytic</note>
    </ligand>
</feature>
<feature type="binding site" evidence="1">
    <location>
        <position position="93"/>
    </location>
    <ligand>
        <name>Zn(2+)</name>
        <dbReference type="ChEBI" id="CHEBI:29105"/>
        <label>2</label>
    </ligand>
</feature>
<feature type="binding site" evidence="1">
    <location>
        <position position="96"/>
    </location>
    <ligand>
        <name>Zn(2+)</name>
        <dbReference type="ChEBI" id="CHEBI:29105"/>
        <label>2</label>
    </ligand>
</feature>
<feature type="binding site" evidence="1">
    <location>
        <position position="99"/>
    </location>
    <ligand>
        <name>Zn(2+)</name>
        <dbReference type="ChEBI" id="CHEBI:29105"/>
        <label>2</label>
    </ligand>
</feature>
<feature type="binding site" evidence="1">
    <location>
        <position position="107"/>
    </location>
    <ligand>
        <name>Zn(2+)</name>
        <dbReference type="ChEBI" id="CHEBI:29105"/>
        <label>2</label>
    </ligand>
</feature>
<feature type="binding site" evidence="1">
    <location>
        <position position="175"/>
    </location>
    <ligand>
        <name>NAD(+)</name>
        <dbReference type="ChEBI" id="CHEBI:57540"/>
    </ligand>
</feature>
<feature type="binding site" evidence="1">
    <location>
        <position position="195"/>
    </location>
    <ligand>
        <name>NAD(+)</name>
        <dbReference type="ChEBI" id="CHEBI:57540"/>
    </ligand>
</feature>
<feature type="binding site" evidence="1">
    <location>
        <position position="200"/>
    </location>
    <ligand>
        <name>NAD(+)</name>
        <dbReference type="ChEBI" id="CHEBI:57540"/>
    </ligand>
</feature>
<feature type="binding site" evidence="1">
    <location>
        <begin position="262"/>
        <end position="264"/>
    </location>
    <ligand>
        <name>NAD(+)</name>
        <dbReference type="ChEBI" id="CHEBI:57540"/>
    </ligand>
</feature>
<feature type="binding site" evidence="1">
    <location>
        <begin position="286"/>
        <end position="287"/>
    </location>
    <ligand>
        <name>NAD(+)</name>
        <dbReference type="ChEBI" id="CHEBI:57540"/>
    </ligand>
</feature>
<feature type="site" description="Important for catalytic activity for the proton relay mechanism but does not participate directly in the coordination of zinc atom" evidence="1">
    <location>
        <position position="148"/>
    </location>
</feature>
<gene>
    <name evidence="1" type="primary">tdh</name>
    <name type="ordered locus">Ecok1_35990</name>
    <name type="ORF">APECO1_2839</name>
</gene>
<protein>
    <recommendedName>
        <fullName evidence="1">L-threonine 3-dehydrogenase</fullName>
        <shortName evidence="1">TDH</shortName>
        <ecNumber evidence="1">1.1.1.103</ecNumber>
    </recommendedName>
</protein>
<reference key="1">
    <citation type="journal article" date="2007" name="J. Bacteriol.">
        <title>The genome sequence of avian pathogenic Escherichia coli strain O1:K1:H7 shares strong similarities with human extraintestinal pathogenic E. coli genomes.</title>
        <authorList>
            <person name="Johnson T.J."/>
            <person name="Kariyawasam S."/>
            <person name="Wannemuehler Y."/>
            <person name="Mangiamele P."/>
            <person name="Johnson S.J."/>
            <person name="Doetkott C."/>
            <person name="Skyberg J.A."/>
            <person name="Lynne A.M."/>
            <person name="Johnson J.R."/>
            <person name="Nolan L.K."/>
        </authorList>
    </citation>
    <scope>NUCLEOTIDE SEQUENCE [LARGE SCALE GENOMIC DNA]</scope>
</reference>